<proteinExistence type="inferred from homology"/>
<comment type="function">
    <text evidence="1">Binds to the 23S rRNA.</text>
</comment>
<comment type="subunit">
    <text evidence="1">Part of the 50S ribosomal subunit.</text>
</comment>
<comment type="similarity">
    <text evidence="1">Belongs to the universal ribosomal protein uL15 family.</text>
</comment>
<protein>
    <recommendedName>
        <fullName evidence="1">Large ribosomal subunit protein uL15</fullName>
    </recommendedName>
    <alternativeName>
        <fullName evidence="3">50S ribosomal protein L15</fullName>
    </alternativeName>
</protein>
<name>RL15_HELPH</name>
<feature type="chain" id="PRO_0000251519" description="Large ribosomal subunit protein uL15">
    <location>
        <begin position="1"/>
        <end position="135"/>
    </location>
</feature>
<feature type="region of interest" description="Disordered" evidence="2">
    <location>
        <begin position="21"/>
        <end position="66"/>
    </location>
</feature>
<sequence length="135" mass="14905">MIMGLENLKPAKGSVKKIKRVGRGQGSGMGKTATRGGKGQTARTGYKAKRGFEGGQQPLQRRLPKIGFRTKDSHIYSINVEKNEAIKNLEEITFSSLRALHHFPLYIEGVKLIGKDAKNLASKIKDERIKTSGQK</sequence>
<keyword id="KW-0687">Ribonucleoprotein</keyword>
<keyword id="KW-0689">Ribosomal protein</keyword>
<keyword id="KW-0694">RNA-binding</keyword>
<keyword id="KW-0699">rRNA-binding</keyword>
<evidence type="ECO:0000255" key="1">
    <source>
        <dbReference type="HAMAP-Rule" id="MF_01341"/>
    </source>
</evidence>
<evidence type="ECO:0000256" key="2">
    <source>
        <dbReference type="SAM" id="MobiDB-lite"/>
    </source>
</evidence>
<evidence type="ECO:0000305" key="3"/>
<accession>Q1CRV9</accession>
<gene>
    <name evidence="1" type="primary">rplO</name>
    <name type="ordered locus">HPAG1_1246</name>
</gene>
<dbReference type="EMBL" id="CP000241">
    <property type="protein sequence ID" value="ABF85313.1"/>
    <property type="molecule type" value="Genomic_DNA"/>
</dbReference>
<dbReference type="SMR" id="Q1CRV9"/>
<dbReference type="KEGG" id="hpa:HPAG1_1246"/>
<dbReference type="HOGENOM" id="CLU_055188_6_0_7"/>
<dbReference type="GO" id="GO:0022625">
    <property type="term" value="C:cytosolic large ribosomal subunit"/>
    <property type="evidence" value="ECO:0007669"/>
    <property type="project" value="TreeGrafter"/>
</dbReference>
<dbReference type="GO" id="GO:0019843">
    <property type="term" value="F:rRNA binding"/>
    <property type="evidence" value="ECO:0007669"/>
    <property type="project" value="UniProtKB-UniRule"/>
</dbReference>
<dbReference type="GO" id="GO:0003735">
    <property type="term" value="F:structural constituent of ribosome"/>
    <property type="evidence" value="ECO:0007669"/>
    <property type="project" value="InterPro"/>
</dbReference>
<dbReference type="GO" id="GO:0006412">
    <property type="term" value="P:translation"/>
    <property type="evidence" value="ECO:0007669"/>
    <property type="project" value="UniProtKB-UniRule"/>
</dbReference>
<dbReference type="HAMAP" id="MF_01341">
    <property type="entry name" value="Ribosomal_uL15"/>
    <property type="match status" value="1"/>
</dbReference>
<dbReference type="InterPro" id="IPR030878">
    <property type="entry name" value="Ribosomal_uL15"/>
</dbReference>
<dbReference type="InterPro" id="IPR036227">
    <property type="entry name" value="Ribosomal_uL15/eL18_sf"/>
</dbReference>
<dbReference type="InterPro" id="IPR005749">
    <property type="entry name" value="Ribosomal_uL15_bac-type"/>
</dbReference>
<dbReference type="NCBIfam" id="TIGR01071">
    <property type="entry name" value="rplO_bact"/>
    <property type="match status" value="1"/>
</dbReference>
<dbReference type="PANTHER" id="PTHR12934">
    <property type="entry name" value="50S RIBOSOMAL PROTEIN L15"/>
    <property type="match status" value="1"/>
</dbReference>
<dbReference type="PANTHER" id="PTHR12934:SF11">
    <property type="entry name" value="LARGE RIBOSOMAL SUBUNIT PROTEIN UL15M"/>
    <property type="match status" value="1"/>
</dbReference>
<dbReference type="SUPFAM" id="SSF52080">
    <property type="entry name" value="Ribosomal proteins L15p and L18e"/>
    <property type="match status" value="1"/>
</dbReference>
<organism>
    <name type="scientific">Helicobacter pylori (strain HPAG1)</name>
    <dbReference type="NCBI Taxonomy" id="357544"/>
    <lineage>
        <taxon>Bacteria</taxon>
        <taxon>Pseudomonadati</taxon>
        <taxon>Campylobacterota</taxon>
        <taxon>Epsilonproteobacteria</taxon>
        <taxon>Campylobacterales</taxon>
        <taxon>Helicobacteraceae</taxon>
        <taxon>Helicobacter</taxon>
    </lineage>
</organism>
<reference key="1">
    <citation type="journal article" date="2006" name="Proc. Natl. Acad. Sci. U.S.A.">
        <title>The complete genome sequence of a chronic atrophic gastritis Helicobacter pylori strain: evolution during disease progression.</title>
        <authorList>
            <person name="Oh J.D."/>
            <person name="Kling-Baeckhed H."/>
            <person name="Giannakis M."/>
            <person name="Xu J."/>
            <person name="Fulton R.S."/>
            <person name="Fulton L.A."/>
            <person name="Cordum H.S."/>
            <person name="Wang C."/>
            <person name="Elliott G."/>
            <person name="Edwards J."/>
            <person name="Mardis E.R."/>
            <person name="Engstrand L.G."/>
            <person name="Gordon J.I."/>
        </authorList>
    </citation>
    <scope>NUCLEOTIDE SEQUENCE [LARGE SCALE GENOMIC DNA]</scope>
    <source>
        <strain>HPAG1</strain>
    </source>
</reference>